<accession>P44095</accession>
<dbReference type="EMBL" id="L42023">
    <property type="protein sequence ID" value="AAC22681.1"/>
    <property type="molecule type" value="Genomic_DNA"/>
</dbReference>
<dbReference type="PIR" id="E64018">
    <property type="entry name" value="E64018"/>
</dbReference>
<dbReference type="RefSeq" id="NP_439177.1">
    <property type="nucleotide sequence ID" value="NC_000907.1"/>
</dbReference>
<dbReference type="STRING" id="71421.HI_1016"/>
<dbReference type="EnsemblBacteria" id="AAC22681">
    <property type="protein sequence ID" value="AAC22681"/>
    <property type="gene ID" value="HI_1016"/>
</dbReference>
<dbReference type="KEGG" id="hin:HI_1016"/>
<dbReference type="PATRIC" id="fig|71421.8.peg.1060"/>
<dbReference type="eggNOG" id="COG1878">
    <property type="taxonomic scope" value="Bacteria"/>
</dbReference>
<dbReference type="HOGENOM" id="CLU_1813073_0_0_6"/>
<dbReference type="OrthoDB" id="7067800at2"/>
<dbReference type="PhylomeDB" id="P44095"/>
<dbReference type="BioCyc" id="HINF71421:G1GJ1-1056-MONOMER"/>
<dbReference type="Proteomes" id="UP000000579">
    <property type="component" value="Chromosome"/>
</dbReference>
<dbReference type="GO" id="GO:0016020">
    <property type="term" value="C:membrane"/>
    <property type="evidence" value="ECO:0007669"/>
    <property type="project" value="UniProtKB-SubCell"/>
</dbReference>
<dbReference type="GO" id="GO:0004061">
    <property type="term" value="F:arylformamidase activity"/>
    <property type="evidence" value="ECO:0007669"/>
    <property type="project" value="InterPro"/>
</dbReference>
<dbReference type="GO" id="GO:0019441">
    <property type="term" value="P:L-tryptophan catabolic process to kynurenine"/>
    <property type="evidence" value="ECO:0007669"/>
    <property type="project" value="InterPro"/>
</dbReference>
<dbReference type="Gene3D" id="3.50.30.50">
    <property type="entry name" value="Putative cyclase"/>
    <property type="match status" value="1"/>
</dbReference>
<dbReference type="InterPro" id="IPR007325">
    <property type="entry name" value="KFase/CYL"/>
</dbReference>
<dbReference type="InterPro" id="IPR037175">
    <property type="entry name" value="KFase_sf"/>
</dbReference>
<dbReference type="Pfam" id="PF04199">
    <property type="entry name" value="Cyclase"/>
    <property type="match status" value="1"/>
</dbReference>
<dbReference type="SUPFAM" id="SSF102198">
    <property type="entry name" value="Putative cyclase"/>
    <property type="match status" value="1"/>
</dbReference>
<feature type="chain" id="PRO_0000077992" description="Uncharacterized protein HI_1016">
    <location>
        <begin position="1"/>
        <end position="142"/>
    </location>
</feature>
<feature type="transmembrane region" description="Helical" evidence="1">
    <location>
        <begin position="75"/>
        <end position="91"/>
    </location>
</feature>
<reference key="1">
    <citation type="journal article" date="1995" name="Science">
        <title>Whole-genome random sequencing and assembly of Haemophilus influenzae Rd.</title>
        <authorList>
            <person name="Fleischmann R.D."/>
            <person name="Adams M.D."/>
            <person name="White O."/>
            <person name="Clayton R.A."/>
            <person name="Kirkness E.F."/>
            <person name="Kerlavage A.R."/>
            <person name="Bult C.J."/>
            <person name="Tomb J.-F."/>
            <person name="Dougherty B.A."/>
            <person name="Merrick J.M."/>
            <person name="McKenney K."/>
            <person name="Sutton G.G."/>
            <person name="FitzHugh W."/>
            <person name="Fields C.A."/>
            <person name="Gocayne J.D."/>
            <person name="Scott J.D."/>
            <person name="Shirley R."/>
            <person name="Liu L.-I."/>
            <person name="Glodek A."/>
            <person name="Kelley J.M."/>
            <person name="Weidman J.F."/>
            <person name="Phillips C.A."/>
            <person name="Spriggs T."/>
            <person name="Hedblom E."/>
            <person name="Cotton M.D."/>
            <person name="Utterback T.R."/>
            <person name="Hanna M.C."/>
            <person name="Nguyen D.T."/>
            <person name="Saudek D.M."/>
            <person name="Brandon R.C."/>
            <person name="Fine L.D."/>
            <person name="Fritchman J.L."/>
            <person name="Fuhrmann J.L."/>
            <person name="Geoghagen N.S.M."/>
            <person name="Gnehm C.L."/>
            <person name="McDonald L.A."/>
            <person name="Small K.V."/>
            <person name="Fraser C.M."/>
            <person name="Smith H.O."/>
            <person name="Venter J.C."/>
        </authorList>
    </citation>
    <scope>NUCLEOTIDE SEQUENCE [LARGE SCALE GENOMIC DNA]</scope>
    <source>
        <strain>ATCC 51907 / DSM 11121 / KW20 / Rd</strain>
    </source>
</reference>
<comment type="subcellular location">
    <subcellularLocation>
        <location evidence="2">Membrane</location>
        <topology evidence="2">Single-pass membrane protein</topology>
    </subcellularLocation>
</comment>
<sequence length="142" mass="15926">MIRCTDINEITPFSSFISKIPNHCGTHMDASRHFVKDGLSINELPIGYFCHKDVVLLEVPKGEAEGITKEDLEPYAAILAQVSFAFLCTGFEKYRTENPLIYQNEGPYIATSAGKYLSDNYPNLKGVGIWFPCTWFAVFSCT</sequence>
<protein>
    <recommendedName>
        <fullName>Uncharacterized protein HI_1016</fullName>
    </recommendedName>
</protein>
<gene>
    <name type="ordered locus">HI_1016</name>
</gene>
<keyword id="KW-0472">Membrane</keyword>
<keyword id="KW-1185">Reference proteome</keyword>
<keyword id="KW-0812">Transmembrane</keyword>
<keyword id="KW-1133">Transmembrane helix</keyword>
<proteinExistence type="predicted"/>
<evidence type="ECO:0000255" key="1"/>
<evidence type="ECO:0000305" key="2"/>
<organism>
    <name type="scientific">Haemophilus influenzae (strain ATCC 51907 / DSM 11121 / KW20 / Rd)</name>
    <dbReference type="NCBI Taxonomy" id="71421"/>
    <lineage>
        <taxon>Bacteria</taxon>
        <taxon>Pseudomonadati</taxon>
        <taxon>Pseudomonadota</taxon>
        <taxon>Gammaproteobacteria</taxon>
        <taxon>Pasteurellales</taxon>
        <taxon>Pasteurellaceae</taxon>
        <taxon>Haemophilus</taxon>
    </lineage>
</organism>
<name>Y1016_HAEIN</name>